<evidence type="ECO:0000255" key="1">
    <source>
        <dbReference type="HAMAP-Rule" id="MF_00061"/>
    </source>
</evidence>
<sequence>MRTQWPSPAKLNLFLYITGQRADGYHTLQTLFQFLDYGDTISIELRDDGDIRLLTPVEGVEHEDNLIVRAARLLMKTAADSGRLPTGSGADISIDKRLPMGGGLGGGSSNAATVLVALNHLWQCGLSMDELAEMGLTLGADVPVFVRGHAAFAEGVGEILTPVDPPEKWYLVAHPGVSIPTPVIFKDPELPRNTPKRSIETLLKCEFSNDCEVIARKRFREVDAVLSWLLEYAPSRLTGTGACVFAEFDTESEARQVLEQAPEWLNGFVAKGVNLSPLHRAML</sequence>
<name>ISPE_ECOHS</name>
<dbReference type="EC" id="2.7.1.148" evidence="1"/>
<dbReference type="EMBL" id="CP000802">
    <property type="protein sequence ID" value="ABV05648.1"/>
    <property type="molecule type" value="Genomic_DNA"/>
</dbReference>
<dbReference type="RefSeq" id="WP_001260323.1">
    <property type="nucleotide sequence ID" value="NC_009800.1"/>
</dbReference>
<dbReference type="SMR" id="A7ZZE4"/>
<dbReference type="KEGG" id="ecx:EcHS_A1313"/>
<dbReference type="HOGENOM" id="CLU_053057_3_0_6"/>
<dbReference type="UniPathway" id="UPA00056">
    <property type="reaction ID" value="UER00094"/>
</dbReference>
<dbReference type="GO" id="GO:0050515">
    <property type="term" value="F:4-(cytidine 5'-diphospho)-2-C-methyl-D-erythritol kinase activity"/>
    <property type="evidence" value="ECO:0007669"/>
    <property type="project" value="UniProtKB-UniRule"/>
</dbReference>
<dbReference type="GO" id="GO:0005524">
    <property type="term" value="F:ATP binding"/>
    <property type="evidence" value="ECO:0007669"/>
    <property type="project" value="UniProtKB-UniRule"/>
</dbReference>
<dbReference type="GO" id="GO:0019288">
    <property type="term" value="P:isopentenyl diphosphate biosynthetic process, methylerythritol 4-phosphate pathway"/>
    <property type="evidence" value="ECO:0007669"/>
    <property type="project" value="UniProtKB-UniRule"/>
</dbReference>
<dbReference type="GO" id="GO:0016114">
    <property type="term" value="P:terpenoid biosynthetic process"/>
    <property type="evidence" value="ECO:0007669"/>
    <property type="project" value="InterPro"/>
</dbReference>
<dbReference type="FunFam" id="3.30.230.10:FF:000022">
    <property type="entry name" value="4-diphosphocytidyl-2-C-methyl-D-erythritol kinase"/>
    <property type="match status" value="1"/>
</dbReference>
<dbReference type="FunFam" id="3.30.70.890:FF:000004">
    <property type="entry name" value="4-diphosphocytidyl-2-C-methyl-D-erythritol kinase"/>
    <property type="match status" value="1"/>
</dbReference>
<dbReference type="Gene3D" id="3.30.230.10">
    <property type="match status" value="1"/>
</dbReference>
<dbReference type="Gene3D" id="3.30.70.890">
    <property type="entry name" value="GHMP kinase, C-terminal domain"/>
    <property type="match status" value="1"/>
</dbReference>
<dbReference type="HAMAP" id="MF_00061">
    <property type="entry name" value="IspE"/>
    <property type="match status" value="1"/>
</dbReference>
<dbReference type="InterPro" id="IPR013750">
    <property type="entry name" value="GHMP_kinase_C_dom"/>
</dbReference>
<dbReference type="InterPro" id="IPR036554">
    <property type="entry name" value="GHMP_kinase_C_sf"/>
</dbReference>
<dbReference type="InterPro" id="IPR006204">
    <property type="entry name" value="GHMP_kinase_N_dom"/>
</dbReference>
<dbReference type="InterPro" id="IPR004424">
    <property type="entry name" value="IspE"/>
</dbReference>
<dbReference type="InterPro" id="IPR020568">
    <property type="entry name" value="Ribosomal_Su5_D2-typ_SF"/>
</dbReference>
<dbReference type="InterPro" id="IPR014721">
    <property type="entry name" value="Ribsml_uS5_D2-typ_fold_subgr"/>
</dbReference>
<dbReference type="NCBIfam" id="TIGR00154">
    <property type="entry name" value="ispE"/>
    <property type="match status" value="1"/>
</dbReference>
<dbReference type="PANTHER" id="PTHR43527">
    <property type="entry name" value="4-DIPHOSPHOCYTIDYL-2-C-METHYL-D-ERYTHRITOL KINASE, CHLOROPLASTIC"/>
    <property type="match status" value="1"/>
</dbReference>
<dbReference type="PANTHER" id="PTHR43527:SF2">
    <property type="entry name" value="4-DIPHOSPHOCYTIDYL-2-C-METHYL-D-ERYTHRITOL KINASE, CHLOROPLASTIC"/>
    <property type="match status" value="1"/>
</dbReference>
<dbReference type="Pfam" id="PF08544">
    <property type="entry name" value="GHMP_kinases_C"/>
    <property type="match status" value="1"/>
</dbReference>
<dbReference type="Pfam" id="PF00288">
    <property type="entry name" value="GHMP_kinases_N"/>
    <property type="match status" value="1"/>
</dbReference>
<dbReference type="PIRSF" id="PIRSF010376">
    <property type="entry name" value="IspE"/>
    <property type="match status" value="1"/>
</dbReference>
<dbReference type="SUPFAM" id="SSF55060">
    <property type="entry name" value="GHMP Kinase, C-terminal domain"/>
    <property type="match status" value="1"/>
</dbReference>
<dbReference type="SUPFAM" id="SSF54211">
    <property type="entry name" value="Ribosomal protein S5 domain 2-like"/>
    <property type="match status" value="1"/>
</dbReference>
<organism>
    <name type="scientific">Escherichia coli O9:H4 (strain HS)</name>
    <dbReference type="NCBI Taxonomy" id="331112"/>
    <lineage>
        <taxon>Bacteria</taxon>
        <taxon>Pseudomonadati</taxon>
        <taxon>Pseudomonadota</taxon>
        <taxon>Gammaproteobacteria</taxon>
        <taxon>Enterobacterales</taxon>
        <taxon>Enterobacteriaceae</taxon>
        <taxon>Escherichia</taxon>
    </lineage>
</organism>
<proteinExistence type="inferred from homology"/>
<protein>
    <recommendedName>
        <fullName evidence="1">4-diphosphocytidyl-2-C-methyl-D-erythritol kinase</fullName>
        <shortName evidence="1">CMK</shortName>
        <ecNumber evidence="1">2.7.1.148</ecNumber>
    </recommendedName>
    <alternativeName>
        <fullName evidence="1">4-(cytidine-5'-diphospho)-2-C-methyl-D-erythritol kinase</fullName>
    </alternativeName>
</protein>
<accession>A7ZZE4</accession>
<comment type="function">
    <text evidence="1">Catalyzes the phosphorylation of the position 2 hydroxy group of 4-diphosphocytidyl-2C-methyl-D-erythritol.</text>
</comment>
<comment type="catalytic activity">
    <reaction evidence="1">
        <text>4-CDP-2-C-methyl-D-erythritol + ATP = 4-CDP-2-C-methyl-D-erythritol 2-phosphate + ADP + H(+)</text>
        <dbReference type="Rhea" id="RHEA:18437"/>
        <dbReference type="ChEBI" id="CHEBI:15378"/>
        <dbReference type="ChEBI" id="CHEBI:30616"/>
        <dbReference type="ChEBI" id="CHEBI:57823"/>
        <dbReference type="ChEBI" id="CHEBI:57919"/>
        <dbReference type="ChEBI" id="CHEBI:456216"/>
        <dbReference type="EC" id="2.7.1.148"/>
    </reaction>
</comment>
<comment type="pathway">
    <text evidence="1">Isoprenoid biosynthesis; isopentenyl diphosphate biosynthesis via DXP pathway; isopentenyl diphosphate from 1-deoxy-D-xylulose 5-phosphate: step 3/6.</text>
</comment>
<comment type="subunit">
    <text evidence="1">Homodimer.</text>
</comment>
<comment type="similarity">
    <text evidence="1">Belongs to the GHMP kinase family. IspE subfamily.</text>
</comment>
<reference key="1">
    <citation type="journal article" date="2008" name="J. Bacteriol.">
        <title>The pangenome structure of Escherichia coli: comparative genomic analysis of E. coli commensal and pathogenic isolates.</title>
        <authorList>
            <person name="Rasko D.A."/>
            <person name="Rosovitz M.J."/>
            <person name="Myers G.S.A."/>
            <person name="Mongodin E.F."/>
            <person name="Fricke W.F."/>
            <person name="Gajer P."/>
            <person name="Crabtree J."/>
            <person name="Sebaihia M."/>
            <person name="Thomson N.R."/>
            <person name="Chaudhuri R."/>
            <person name="Henderson I.R."/>
            <person name="Sperandio V."/>
            <person name="Ravel J."/>
        </authorList>
    </citation>
    <scope>NUCLEOTIDE SEQUENCE [LARGE SCALE GENOMIC DNA]</scope>
    <source>
        <strain>HS</strain>
    </source>
</reference>
<feature type="chain" id="PRO_1000057419" description="4-diphosphocytidyl-2-C-methyl-D-erythritol kinase">
    <location>
        <begin position="1"/>
        <end position="283"/>
    </location>
</feature>
<feature type="active site" evidence="1">
    <location>
        <position position="10"/>
    </location>
</feature>
<feature type="active site" evidence="1">
    <location>
        <position position="141"/>
    </location>
</feature>
<feature type="binding site" evidence="1">
    <location>
        <begin position="99"/>
        <end position="109"/>
    </location>
    <ligand>
        <name>ATP</name>
        <dbReference type="ChEBI" id="CHEBI:30616"/>
    </ligand>
</feature>
<gene>
    <name evidence="1" type="primary">ispE</name>
    <name type="ordered locus">EcHS_A1313</name>
</gene>
<keyword id="KW-0067">ATP-binding</keyword>
<keyword id="KW-0414">Isoprene biosynthesis</keyword>
<keyword id="KW-0418">Kinase</keyword>
<keyword id="KW-0547">Nucleotide-binding</keyword>
<keyword id="KW-0808">Transferase</keyword>